<dbReference type="EC" id="6.1.1.12" evidence="1"/>
<dbReference type="EMBL" id="AE005174">
    <property type="protein sequence ID" value="AAG56856.1"/>
    <property type="molecule type" value="Genomic_DNA"/>
</dbReference>
<dbReference type="EMBL" id="BA000007">
    <property type="protein sequence ID" value="BAB35999.1"/>
    <property type="molecule type" value="Genomic_DNA"/>
</dbReference>
<dbReference type="PIR" id="D85799">
    <property type="entry name" value="D85799"/>
</dbReference>
<dbReference type="PIR" id="H90950">
    <property type="entry name" value="H90950"/>
</dbReference>
<dbReference type="RefSeq" id="NP_310603.1">
    <property type="nucleotide sequence ID" value="NC_002695.1"/>
</dbReference>
<dbReference type="RefSeq" id="WP_001258683.1">
    <property type="nucleotide sequence ID" value="NZ_VOAI01000010.1"/>
</dbReference>
<dbReference type="SMR" id="Q8XCI7"/>
<dbReference type="STRING" id="155864.Z2919"/>
<dbReference type="GeneID" id="914186"/>
<dbReference type="KEGG" id="ece:Z2919"/>
<dbReference type="KEGG" id="ecs:ECs_2576"/>
<dbReference type="PATRIC" id="fig|386585.9.peg.2700"/>
<dbReference type="eggNOG" id="COG0173">
    <property type="taxonomic scope" value="Bacteria"/>
</dbReference>
<dbReference type="HOGENOM" id="CLU_014330_3_2_6"/>
<dbReference type="Proteomes" id="UP000000558">
    <property type="component" value="Chromosome"/>
</dbReference>
<dbReference type="Proteomes" id="UP000002519">
    <property type="component" value="Chromosome"/>
</dbReference>
<dbReference type="GO" id="GO:0005737">
    <property type="term" value="C:cytoplasm"/>
    <property type="evidence" value="ECO:0007669"/>
    <property type="project" value="UniProtKB-SubCell"/>
</dbReference>
<dbReference type="GO" id="GO:0004815">
    <property type="term" value="F:aspartate-tRNA ligase activity"/>
    <property type="evidence" value="ECO:0007669"/>
    <property type="project" value="UniProtKB-UniRule"/>
</dbReference>
<dbReference type="GO" id="GO:0005524">
    <property type="term" value="F:ATP binding"/>
    <property type="evidence" value="ECO:0007669"/>
    <property type="project" value="UniProtKB-UniRule"/>
</dbReference>
<dbReference type="GO" id="GO:0003676">
    <property type="term" value="F:nucleic acid binding"/>
    <property type="evidence" value="ECO:0007669"/>
    <property type="project" value="InterPro"/>
</dbReference>
<dbReference type="GO" id="GO:0006422">
    <property type="term" value="P:aspartyl-tRNA aminoacylation"/>
    <property type="evidence" value="ECO:0007669"/>
    <property type="project" value="UniProtKB-UniRule"/>
</dbReference>
<dbReference type="CDD" id="cd00777">
    <property type="entry name" value="AspRS_core"/>
    <property type="match status" value="1"/>
</dbReference>
<dbReference type="CDD" id="cd04317">
    <property type="entry name" value="EcAspRS_like_N"/>
    <property type="match status" value="1"/>
</dbReference>
<dbReference type="FunFam" id="2.40.50.140:FF:000080">
    <property type="entry name" value="Aspartate--tRNA ligase"/>
    <property type="match status" value="1"/>
</dbReference>
<dbReference type="FunFam" id="3.30.1360.30:FF:000001">
    <property type="entry name" value="Aspartate--tRNA ligase"/>
    <property type="match status" value="1"/>
</dbReference>
<dbReference type="Gene3D" id="3.30.930.10">
    <property type="entry name" value="Bira Bifunctional Protein, Domain 2"/>
    <property type="match status" value="1"/>
</dbReference>
<dbReference type="Gene3D" id="3.30.1360.30">
    <property type="entry name" value="GAD-like domain"/>
    <property type="match status" value="1"/>
</dbReference>
<dbReference type="Gene3D" id="2.40.50.140">
    <property type="entry name" value="Nucleic acid-binding proteins"/>
    <property type="match status" value="1"/>
</dbReference>
<dbReference type="HAMAP" id="MF_00044">
    <property type="entry name" value="Asp_tRNA_synth_type1"/>
    <property type="match status" value="1"/>
</dbReference>
<dbReference type="InterPro" id="IPR004364">
    <property type="entry name" value="Aa-tRNA-synt_II"/>
</dbReference>
<dbReference type="InterPro" id="IPR006195">
    <property type="entry name" value="aa-tRNA-synth_II"/>
</dbReference>
<dbReference type="InterPro" id="IPR045864">
    <property type="entry name" value="aa-tRNA-synth_II/BPL/LPL"/>
</dbReference>
<dbReference type="InterPro" id="IPR004524">
    <property type="entry name" value="Asp-tRNA-ligase_1"/>
</dbReference>
<dbReference type="InterPro" id="IPR047089">
    <property type="entry name" value="Asp-tRNA-ligase_1_N"/>
</dbReference>
<dbReference type="InterPro" id="IPR002312">
    <property type="entry name" value="Asp/Asn-tRNA-synth_IIb"/>
</dbReference>
<dbReference type="InterPro" id="IPR047090">
    <property type="entry name" value="AspRS_core"/>
</dbReference>
<dbReference type="InterPro" id="IPR004115">
    <property type="entry name" value="GAD-like_sf"/>
</dbReference>
<dbReference type="InterPro" id="IPR029351">
    <property type="entry name" value="GAD_dom"/>
</dbReference>
<dbReference type="InterPro" id="IPR012340">
    <property type="entry name" value="NA-bd_OB-fold"/>
</dbReference>
<dbReference type="InterPro" id="IPR004365">
    <property type="entry name" value="NA-bd_OB_tRNA"/>
</dbReference>
<dbReference type="NCBIfam" id="TIGR00459">
    <property type="entry name" value="aspS_bact"/>
    <property type="match status" value="1"/>
</dbReference>
<dbReference type="NCBIfam" id="NF001750">
    <property type="entry name" value="PRK00476.1"/>
    <property type="match status" value="1"/>
</dbReference>
<dbReference type="PANTHER" id="PTHR22594:SF5">
    <property type="entry name" value="ASPARTATE--TRNA LIGASE, MITOCHONDRIAL"/>
    <property type="match status" value="1"/>
</dbReference>
<dbReference type="PANTHER" id="PTHR22594">
    <property type="entry name" value="ASPARTYL/LYSYL-TRNA SYNTHETASE"/>
    <property type="match status" value="1"/>
</dbReference>
<dbReference type="Pfam" id="PF02938">
    <property type="entry name" value="GAD"/>
    <property type="match status" value="1"/>
</dbReference>
<dbReference type="Pfam" id="PF00152">
    <property type="entry name" value="tRNA-synt_2"/>
    <property type="match status" value="1"/>
</dbReference>
<dbReference type="Pfam" id="PF01336">
    <property type="entry name" value="tRNA_anti-codon"/>
    <property type="match status" value="1"/>
</dbReference>
<dbReference type="PRINTS" id="PR01042">
    <property type="entry name" value="TRNASYNTHASP"/>
</dbReference>
<dbReference type="SUPFAM" id="SSF55681">
    <property type="entry name" value="Class II aaRS and biotin synthetases"/>
    <property type="match status" value="1"/>
</dbReference>
<dbReference type="SUPFAM" id="SSF55261">
    <property type="entry name" value="GAD domain-like"/>
    <property type="match status" value="1"/>
</dbReference>
<dbReference type="SUPFAM" id="SSF50249">
    <property type="entry name" value="Nucleic acid-binding proteins"/>
    <property type="match status" value="1"/>
</dbReference>
<dbReference type="PROSITE" id="PS50862">
    <property type="entry name" value="AA_TRNA_LIGASE_II"/>
    <property type="match status" value="1"/>
</dbReference>
<accession>Q8XCI7</accession>
<organism>
    <name type="scientific">Escherichia coli O157:H7</name>
    <dbReference type="NCBI Taxonomy" id="83334"/>
    <lineage>
        <taxon>Bacteria</taxon>
        <taxon>Pseudomonadati</taxon>
        <taxon>Pseudomonadota</taxon>
        <taxon>Gammaproteobacteria</taxon>
        <taxon>Enterobacterales</taxon>
        <taxon>Enterobacteriaceae</taxon>
        <taxon>Escherichia</taxon>
    </lineage>
</organism>
<gene>
    <name evidence="1" type="primary">aspS</name>
    <name type="ordered locus">Z2919</name>
    <name type="ordered locus">ECs2576</name>
</gene>
<name>SYD_ECO57</name>
<reference key="1">
    <citation type="journal article" date="2001" name="Nature">
        <title>Genome sequence of enterohaemorrhagic Escherichia coli O157:H7.</title>
        <authorList>
            <person name="Perna N.T."/>
            <person name="Plunkett G. III"/>
            <person name="Burland V."/>
            <person name="Mau B."/>
            <person name="Glasner J.D."/>
            <person name="Rose D.J."/>
            <person name="Mayhew G.F."/>
            <person name="Evans P.S."/>
            <person name="Gregor J."/>
            <person name="Kirkpatrick H.A."/>
            <person name="Posfai G."/>
            <person name="Hackett J."/>
            <person name="Klink S."/>
            <person name="Boutin A."/>
            <person name="Shao Y."/>
            <person name="Miller L."/>
            <person name="Grotbeck E.J."/>
            <person name="Davis N.W."/>
            <person name="Lim A."/>
            <person name="Dimalanta E.T."/>
            <person name="Potamousis K."/>
            <person name="Apodaca J."/>
            <person name="Anantharaman T.S."/>
            <person name="Lin J."/>
            <person name="Yen G."/>
            <person name="Schwartz D.C."/>
            <person name="Welch R.A."/>
            <person name="Blattner F.R."/>
        </authorList>
    </citation>
    <scope>NUCLEOTIDE SEQUENCE [LARGE SCALE GENOMIC DNA]</scope>
    <source>
        <strain>O157:H7 / EDL933 / ATCC 700927 / EHEC</strain>
    </source>
</reference>
<reference key="2">
    <citation type="journal article" date="2001" name="DNA Res.">
        <title>Complete genome sequence of enterohemorrhagic Escherichia coli O157:H7 and genomic comparison with a laboratory strain K-12.</title>
        <authorList>
            <person name="Hayashi T."/>
            <person name="Makino K."/>
            <person name="Ohnishi M."/>
            <person name="Kurokawa K."/>
            <person name="Ishii K."/>
            <person name="Yokoyama K."/>
            <person name="Han C.-G."/>
            <person name="Ohtsubo E."/>
            <person name="Nakayama K."/>
            <person name="Murata T."/>
            <person name="Tanaka M."/>
            <person name="Tobe T."/>
            <person name="Iida T."/>
            <person name="Takami H."/>
            <person name="Honda T."/>
            <person name="Sasakawa C."/>
            <person name="Ogasawara N."/>
            <person name="Yasunaga T."/>
            <person name="Kuhara S."/>
            <person name="Shiba T."/>
            <person name="Hattori M."/>
            <person name="Shinagawa H."/>
        </authorList>
    </citation>
    <scope>NUCLEOTIDE SEQUENCE [LARGE SCALE GENOMIC DNA]</scope>
    <source>
        <strain>O157:H7 / Sakai / RIMD 0509952 / EHEC</strain>
    </source>
</reference>
<comment type="function">
    <text evidence="1">Catalyzes the attachment of L-aspartate to tRNA(Asp) in a two-step reaction: L-aspartate is first activated by ATP to form Asp-AMP and then transferred to the acceptor end of tRNA(Asp).</text>
</comment>
<comment type="catalytic activity">
    <reaction evidence="1">
        <text>tRNA(Asp) + L-aspartate + ATP = L-aspartyl-tRNA(Asp) + AMP + diphosphate</text>
        <dbReference type="Rhea" id="RHEA:19649"/>
        <dbReference type="Rhea" id="RHEA-COMP:9660"/>
        <dbReference type="Rhea" id="RHEA-COMP:9678"/>
        <dbReference type="ChEBI" id="CHEBI:29991"/>
        <dbReference type="ChEBI" id="CHEBI:30616"/>
        <dbReference type="ChEBI" id="CHEBI:33019"/>
        <dbReference type="ChEBI" id="CHEBI:78442"/>
        <dbReference type="ChEBI" id="CHEBI:78516"/>
        <dbReference type="ChEBI" id="CHEBI:456215"/>
        <dbReference type="EC" id="6.1.1.12"/>
    </reaction>
</comment>
<comment type="subunit">
    <text evidence="1">Homodimer.</text>
</comment>
<comment type="subcellular location">
    <subcellularLocation>
        <location evidence="1">Cytoplasm</location>
    </subcellularLocation>
</comment>
<comment type="similarity">
    <text evidence="1">Belongs to the class-II aminoacyl-tRNA synthetase family. Type 1 subfamily.</text>
</comment>
<keyword id="KW-0030">Aminoacyl-tRNA synthetase</keyword>
<keyword id="KW-0067">ATP-binding</keyword>
<keyword id="KW-0963">Cytoplasm</keyword>
<keyword id="KW-0436">Ligase</keyword>
<keyword id="KW-0547">Nucleotide-binding</keyword>
<keyword id="KW-0648">Protein biosynthesis</keyword>
<keyword id="KW-1185">Reference proteome</keyword>
<feature type="chain" id="PRO_0000110870" description="Aspartate--tRNA ligase">
    <location>
        <begin position="1"/>
        <end position="590"/>
    </location>
</feature>
<feature type="region of interest" description="Aspartate" evidence="1">
    <location>
        <begin position="195"/>
        <end position="198"/>
    </location>
</feature>
<feature type="binding site" evidence="1">
    <location>
        <position position="171"/>
    </location>
    <ligand>
        <name>L-aspartate</name>
        <dbReference type="ChEBI" id="CHEBI:29991"/>
    </ligand>
</feature>
<feature type="binding site" evidence="1">
    <location>
        <begin position="217"/>
        <end position="219"/>
    </location>
    <ligand>
        <name>ATP</name>
        <dbReference type="ChEBI" id="CHEBI:30616"/>
    </ligand>
</feature>
<feature type="binding site" evidence="1">
    <location>
        <position position="217"/>
    </location>
    <ligand>
        <name>L-aspartate</name>
        <dbReference type="ChEBI" id="CHEBI:29991"/>
    </ligand>
</feature>
<feature type="binding site" evidence="1">
    <location>
        <position position="226"/>
    </location>
    <ligand>
        <name>ATP</name>
        <dbReference type="ChEBI" id="CHEBI:30616"/>
    </ligand>
</feature>
<feature type="binding site" evidence="1">
    <location>
        <position position="448"/>
    </location>
    <ligand>
        <name>L-aspartate</name>
        <dbReference type="ChEBI" id="CHEBI:29991"/>
    </ligand>
</feature>
<feature type="binding site" evidence="1">
    <location>
        <position position="482"/>
    </location>
    <ligand>
        <name>ATP</name>
        <dbReference type="ChEBI" id="CHEBI:30616"/>
    </ligand>
</feature>
<feature type="binding site" evidence="1">
    <location>
        <position position="489"/>
    </location>
    <ligand>
        <name>L-aspartate</name>
        <dbReference type="ChEBI" id="CHEBI:29991"/>
    </ligand>
</feature>
<feature type="binding site" evidence="1">
    <location>
        <begin position="534"/>
        <end position="537"/>
    </location>
    <ligand>
        <name>ATP</name>
        <dbReference type="ChEBI" id="CHEBI:30616"/>
    </ligand>
</feature>
<protein>
    <recommendedName>
        <fullName evidence="1">Aspartate--tRNA ligase</fullName>
        <ecNumber evidence="1">6.1.1.12</ecNumber>
    </recommendedName>
    <alternativeName>
        <fullName evidence="1">Aspartyl-tRNA synthetase</fullName>
        <shortName evidence="1">AspRS</shortName>
    </alternativeName>
</protein>
<proteinExistence type="inferred from homology"/>
<evidence type="ECO:0000255" key="1">
    <source>
        <dbReference type="HAMAP-Rule" id="MF_00044"/>
    </source>
</evidence>
<sequence>MRTEYCGQLRLSHVGQQVTLCGWVNRRRDLGSLIFIDMRDREGIVQVFFDPDRADALKLASELRNEFCIQVTGTVRARDEKNINRDMATGEIEVLASSLTIINRADVLPLDSNHVNTEEARLKYRYLDLRRPEMAQRLKTRAKITSLVRRFMDDHGFLDIETPMLTKATPEGARDYLVPSRVHKGKFYALPQSPQLFKQLLMMSGFDRYYQIVKCFRDEDLRADRQPEFTQIDVETSFMTAPQVREVMEALVRHLWLEVKGVDLGDFPVMTFAEAERRYGSDKPDLRNPMELTDVADLLRSVEFAVFAGPANDPKGRVAALCVPGGASLTRKQIDEYGNFVKIYGAKGLAYIKVNERAKGLEGINSPVAKFLNAEIIEAILDRTAAQDGDMIFFGADNKKIVADAMGALRLKVGKDLGLTDESKWAPLWVIDFPMFEDDGEGGLTAMHHPFTSPKDMTAAELKAAPENAVANAYDMVINGYEVGGGSVRIHNGDMQQTVFGILGINEEEQREKFGFLLDALKYGTPPHAGLAFGLDRLTMLLTGTDNIRDVIAFPKTTAAACLMTEAPSFANPAALAELSIQVVKKAENN</sequence>